<protein>
    <recommendedName>
        <fullName evidence="1">Uracil phosphoribosyltransferase</fullName>
        <ecNumber evidence="1">2.4.2.9</ecNumber>
    </recommendedName>
    <alternativeName>
        <fullName evidence="1">UMP pyrophosphorylase</fullName>
    </alternativeName>
    <alternativeName>
        <fullName evidence="1">UPRTase</fullName>
    </alternativeName>
</protein>
<proteinExistence type="inferred from homology"/>
<dbReference type="EC" id="2.4.2.9" evidence="1"/>
<dbReference type="EMBL" id="BX293980">
    <property type="protein sequence ID" value="CAE77504.1"/>
    <property type="status" value="ALT_INIT"/>
    <property type="molecule type" value="Genomic_DNA"/>
</dbReference>
<dbReference type="RefSeq" id="NP_975862.1">
    <property type="nucleotide sequence ID" value="NC_005364.2"/>
</dbReference>
<dbReference type="RefSeq" id="WP_015545345.1">
    <property type="nucleotide sequence ID" value="NC_005364.2"/>
</dbReference>
<dbReference type="SMR" id="Q6MS86"/>
<dbReference type="STRING" id="272632.MSC_0893"/>
<dbReference type="KEGG" id="mmy:MSC_0893"/>
<dbReference type="PATRIC" id="fig|272632.4.peg.965"/>
<dbReference type="eggNOG" id="COG0035">
    <property type="taxonomic scope" value="Bacteria"/>
</dbReference>
<dbReference type="HOGENOM" id="CLU_067096_2_2_14"/>
<dbReference type="UniPathway" id="UPA00574">
    <property type="reaction ID" value="UER00636"/>
</dbReference>
<dbReference type="Proteomes" id="UP000001016">
    <property type="component" value="Chromosome"/>
</dbReference>
<dbReference type="GO" id="GO:0005525">
    <property type="term" value="F:GTP binding"/>
    <property type="evidence" value="ECO:0007669"/>
    <property type="project" value="UniProtKB-KW"/>
</dbReference>
<dbReference type="GO" id="GO:0000287">
    <property type="term" value="F:magnesium ion binding"/>
    <property type="evidence" value="ECO:0007669"/>
    <property type="project" value="UniProtKB-UniRule"/>
</dbReference>
<dbReference type="GO" id="GO:0004845">
    <property type="term" value="F:uracil phosphoribosyltransferase activity"/>
    <property type="evidence" value="ECO:0007669"/>
    <property type="project" value="UniProtKB-UniRule"/>
</dbReference>
<dbReference type="GO" id="GO:0044206">
    <property type="term" value="P:UMP salvage"/>
    <property type="evidence" value="ECO:0007669"/>
    <property type="project" value="UniProtKB-UniRule"/>
</dbReference>
<dbReference type="GO" id="GO:0006223">
    <property type="term" value="P:uracil salvage"/>
    <property type="evidence" value="ECO:0007669"/>
    <property type="project" value="InterPro"/>
</dbReference>
<dbReference type="CDD" id="cd06223">
    <property type="entry name" value="PRTases_typeI"/>
    <property type="match status" value="1"/>
</dbReference>
<dbReference type="FunFam" id="3.40.50.2020:FF:000003">
    <property type="entry name" value="Uracil phosphoribosyltransferase"/>
    <property type="match status" value="1"/>
</dbReference>
<dbReference type="Gene3D" id="3.40.50.2020">
    <property type="match status" value="1"/>
</dbReference>
<dbReference type="HAMAP" id="MF_01218_B">
    <property type="entry name" value="Upp_B"/>
    <property type="match status" value="1"/>
</dbReference>
<dbReference type="InterPro" id="IPR000836">
    <property type="entry name" value="PRibTrfase_dom"/>
</dbReference>
<dbReference type="InterPro" id="IPR029057">
    <property type="entry name" value="PRTase-like"/>
</dbReference>
<dbReference type="InterPro" id="IPR034332">
    <property type="entry name" value="Upp_B"/>
</dbReference>
<dbReference type="InterPro" id="IPR050054">
    <property type="entry name" value="UPRTase/APRTase"/>
</dbReference>
<dbReference type="InterPro" id="IPR005765">
    <property type="entry name" value="Ura_phspho_trans"/>
</dbReference>
<dbReference type="NCBIfam" id="NF001097">
    <property type="entry name" value="PRK00129.1"/>
    <property type="match status" value="1"/>
</dbReference>
<dbReference type="NCBIfam" id="TIGR01091">
    <property type="entry name" value="upp"/>
    <property type="match status" value="1"/>
</dbReference>
<dbReference type="PANTHER" id="PTHR32315">
    <property type="entry name" value="ADENINE PHOSPHORIBOSYLTRANSFERASE"/>
    <property type="match status" value="1"/>
</dbReference>
<dbReference type="PANTHER" id="PTHR32315:SF4">
    <property type="entry name" value="URACIL PHOSPHORIBOSYLTRANSFERASE, CHLOROPLASTIC"/>
    <property type="match status" value="1"/>
</dbReference>
<dbReference type="Pfam" id="PF14681">
    <property type="entry name" value="UPRTase"/>
    <property type="match status" value="1"/>
</dbReference>
<dbReference type="SUPFAM" id="SSF53271">
    <property type="entry name" value="PRTase-like"/>
    <property type="match status" value="1"/>
</dbReference>
<comment type="function">
    <text evidence="1">Catalyzes the conversion of uracil and 5-phospho-alpha-D-ribose 1-diphosphate (PRPP) to UMP and diphosphate.</text>
</comment>
<comment type="catalytic activity">
    <reaction evidence="1">
        <text>UMP + diphosphate = 5-phospho-alpha-D-ribose 1-diphosphate + uracil</text>
        <dbReference type="Rhea" id="RHEA:13017"/>
        <dbReference type="ChEBI" id="CHEBI:17568"/>
        <dbReference type="ChEBI" id="CHEBI:33019"/>
        <dbReference type="ChEBI" id="CHEBI:57865"/>
        <dbReference type="ChEBI" id="CHEBI:58017"/>
        <dbReference type="EC" id="2.4.2.9"/>
    </reaction>
</comment>
<comment type="cofactor">
    <cofactor evidence="1">
        <name>Mg(2+)</name>
        <dbReference type="ChEBI" id="CHEBI:18420"/>
    </cofactor>
    <text evidence="1">Binds 1 Mg(2+) ion per subunit. The magnesium is bound as Mg-PRPP.</text>
</comment>
<comment type="activity regulation">
    <text evidence="1">Allosterically activated by GTP.</text>
</comment>
<comment type="pathway">
    <text evidence="1">Pyrimidine metabolism; UMP biosynthesis via salvage pathway; UMP from uracil: step 1/1.</text>
</comment>
<comment type="similarity">
    <text evidence="1">Belongs to the UPRTase family.</text>
</comment>
<comment type="sequence caution" evidence="2">
    <conflict type="erroneous initiation">
        <sequence resource="EMBL-CDS" id="CAE77504"/>
    </conflict>
</comment>
<sequence length="207" mass="23156">MAFTEIKHPLIIDKLTRMRKTETSSKDFRENLNEIAQLMVYEIFRDLKLEPVEITTPVAKTTGYTINQPVVLVPILRAGIGMLDGIQKLIPTARIAHVGLYRDETTLEIHQYFAKTTKDIDKSYVIVVDPMLATGGSACKAIDIVKQWGAKEVKFVCLVAVEPGIKRLQEQHPDVEIYAASKDEKLNEKGYIIPGLGDAGDRIFGTK</sequence>
<evidence type="ECO:0000255" key="1">
    <source>
        <dbReference type="HAMAP-Rule" id="MF_01218"/>
    </source>
</evidence>
<evidence type="ECO:0000305" key="2"/>
<reference key="1">
    <citation type="journal article" date="2004" name="Genome Res.">
        <title>The genome sequence of Mycoplasma mycoides subsp. mycoides SC type strain PG1T, the causative agent of contagious bovine pleuropneumonia (CBPP).</title>
        <authorList>
            <person name="Westberg J."/>
            <person name="Persson A."/>
            <person name="Holmberg A."/>
            <person name="Goesmann A."/>
            <person name="Lundeberg J."/>
            <person name="Johansson K.-E."/>
            <person name="Pettersson B."/>
            <person name="Uhlen M."/>
        </authorList>
    </citation>
    <scope>NUCLEOTIDE SEQUENCE [LARGE SCALE GENOMIC DNA]</scope>
    <source>
        <strain>CCUG 32753 / NCTC 10114 / PG1</strain>
    </source>
</reference>
<name>UPP_MYCMS</name>
<keyword id="KW-0021">Allosteric enzyme</keyword>
<keyword id="KW-0328">Glycosyltransferase</keyword>
<keyword id="KW-0342">GTP-binding</keyword>
<keyword id="KW-0460">Magnesium</keyword>
<keyword id="KW-0547">Nucleotide-binding</keyword>
<keyword id="KW-1185">Reference proteome</keyword>
<keyword id="KW-0808">Transferase</keyword>
<feature type="chain" id="PRO_0000120853" description="Uracil phosphoribosyltransferase">
    <location>
        <begin position="1"/>
        <end position="207"/>
    </location>
</feature>
<feature type="binding site" evidence="1">
    <location>
        <position position="77"/>
    </location>
    <ligand>
        <name>5-phospho-alpha-D-ribose 1-diphosphate</name>
        <dbReference type="ChEBI" id="CHEBI:58017"/>
    </ligand>
</feature>
<feature type="binding site" evidence="1">
    <location>
        <position position="102"/>
    </location>
    <ligand>
        <name>5-phospho-alpha-D-ribose 1-diphosphate</name>
        <dbReference type="ChEBI" id="CHEBI:58017"/>
    </ligand>
</feature>
<feature type="binding site" evidence="1">
    <location>
        <begin position="129"/>
        <end position="137"/>
    </location>
    <ligand>
        <name>5-phospho-alpha-D-ribose 1-diphosphate</name>
        <dbReference type="ChEBI" id="CHEBI:58017"/>
    </ligand>
</feature>
<feature type="binding site" evidence="1">
    <location>
        <position position="192"/>
    </location>
    <ligand>
        <name>uracil</name>
        <dbReference type="ChEBI" id="CHEBI:17568"/>
    </ligand>
</feature>
<feature type="binding site" evidence="1">
    <location>
        <begin position="197"/>
        <end position="199"/>
    </location>
    <ligand>
        <name>uracil</name>
        <dbReference type="ChEBI" id="CHEBI:17568"/>
    </ligand>
</feature>
<feature type="binding site" evidence="1">
    <location>
        <position position="198"/>
    </location>
    <ligand>
        <name>5-phospho-alpha-D-ribose 1-diphosphate</name>
        <dbReference type="ChEBI" id="CHEBI:58017"/>
    </ligand>
</feature>
<gene>
    <name evidence="1" type="primary">upp</name>
    <name type="ordered locus">MSC_0893</name>
</gene>
<organism>
    <name type="scientific">Mycoplasma mycoides subsp. mycoides SC (strain CCUG 32753 / NCTC 10114 / PG1)</name>
    <dbReference type="NCBI Taxonomy" id="272632"/>
    <lineage>
        <taxon>Bacteria</taxon>
        <taxon>Bacillati</taxon>
        <taxon>Mycoplasmatota</taxon>
        <taxon>Mollicutes</taxon>
        <taxon>Mycoplasmataceae</taxon>
        <taxon>Mycoplasma</taxon>
    </lineage>
</organism>
<accession>Q6MS86</accession>